<keyword id="KW-0030">Aminoacyl-tRNA synthetase</keyword>
<keyword id="KW-0067">ATP-binding</keyword>
<keyword id="KW-0963">Cytoplasm</keyword>
<keyword id="KW-0436">Ligase</keyword>
<keyword id="KW-0460">Magnesium</keyword>
<keyword id="KW-0479">Metal-binding</keyword>
<keyword id="KW-0547">Nucleotide-binding</keyword>
<keyword id="KW-0648">Protein biosynthesis</keyword>
<accession>A6UF74</accession>
<sequence>MSELETLERTLLAEIEAAADEGAIEAVRVGALGKKGSISELLKTLGSMSAEERQTRGARINALKNTVSEAISARKAELKDAAIAERLARETVDISLPVRSSPAERGRIHPISQIVDEITAIFGDMGFSLAEGPDIETDYYNFTALNFPEGHPAREMHDTFFFAPDEKGERKVLRTHTSPVQIRTMEAEQPPIRIIIPGKTYRQDSDATHSPMFHQVEGLVIDRTANVANMRWVLEEFCKAFFEVDQVTMRFRPSFFPFTEPSFEVDIQCDRSGPIVKFGEGKDWMEILGCGMVHPNVLRAGGLDPDEFQGFAWGMGLDRIAMLKYGMPDLRDFFNADVRWMTHYGFRPLDMPTLFGGLSA</sequence>
<gene>
    <name evidence="1" type="primary">pheS</name>
    <name type="ordered locus">Smed_3486</name>
</gene>
<proteinExistence type="inferred from homology"/>
<dbReference type="EC" id="6.1.1.20" evidence="1"/>
<dbReference type="EMBL" id="CP000738">
    <property type="protein sequence ID" value="ABR62304.1"/>
    <property type="molecule type" value="Genomic_DNA"/>
</dbReference>
<dbReference type="RefSeq" id="WP_012067683.1">
    <property type="nucleotide sequence ID" value="NC_009636.1"/>
</dbReference>
<dbReference type="RefSeq" id="YP_001329139.1">
    <property type="nucleotide sequence ID" value="NC_009636.1"/>
</dbReference>
<dbReference type="SMR" id="A6UF74"/>
<dbReference type="STRING" id="366394.Smed_3486"/>
<dbReference type="GeneID" id="61611039"/>
<dbReference type="KEGG" id="smd:Smed_3486"/>
<dbReference type="PATRIC" id="fig|366394.8.peg.6737"/>
<dbReference type="eggNOG" id="COG0016">
    <property type="taxonomic scope" value="Bacteria"/>
</dbReference>
<dbReference type="HOGENOM" id="CLU_025086_0_1_5"/>
<dbReference type="OrthoDB" id="9800719at2"/>
<dbReference type="Proteomes" id="UP000001108">
    <property type="component" value="Chromosome"/>
</dbReference>
<dbReference type="GO" id="GO:0005737">
    <property type="term" value="C:cytoplasm"/>
    <property type="evidence" value="ECO:0007669"/>
    <property type="project" value="UniProtKB-SubCell"/>
</dbReference>
<dbReference type="GO" id="GO:0005524">
    <property type="term" value="F:ATP binding"/>
    <property type="evidence" value="ECO:0007669"/>
    <property type="project" value="UniProtKB-UniRule"/>
</dbReference>
<dbReference type="GO" id="GO:0000287">
    <property type="term" value="F:magnesium ion binding"/>
    <property type="evidence" value="ECO:0007669"/>
    <property type="project" value="UniProtKB-UniRule"/>
</dbReference>
<dbReference type="GO" id="GO:0004826">
    <property type="term" value="F:phenylalanine-tRNA ligase activity"/>
    <property type="evidence" value="ECO:0007669"/>
    <property type="project" value="UniProtKB-UniRule"/>
</dbReference>
<dbReference type="GO" id="GO:0000049">
    <property type="term" value="F:tRNA binding"/>
    <property type="evidence" value="ECO:0007669"/>
    <property type="project" value="InterPro"/>
</dbReference>
<dbReference type="GO" id="GO:0006432">
    <property type="term" value="P:phenylalanyl-tRNA aminoacylation"/>
    <property type="evidence" value="ECO:0007669"/>
    <property type="project" value="UniProtKB-UniRule"/>
</dbReference>
<dbReference type="CDD" id="cd00496">
    <property type="entry name" value="PheRS_alpha_core"/>
    <property type="match status" value="1"/>
</dbReference>
<dbReference type="FunFam" id="3.30.930.10:FF:000003">
    <property type="entry name" value="Phenylalanine--tRNA ligase alpha subunit"/>
    <property type="match status" value="1"/>
</dbReference>
<dbReference type="Gene3D" id="3.30.930.10">
    <property type="entry name" value="Bira Bifunctional Protein, Domain 2"/>
    <property type="match status" value="1"/>
</dbReference>
<dbReference type="HAMAP" id="MF_00281">
    <property type="entry name" value="Phe_tRNA_synth_alpha1"/>
    <property type="match status" value="1"/>
</dbReference>
<dbReference type="InterPro" id="IPR006195">
    <property type="entry name" value="aa-tRNA-synth_II"/>
</dbReference>
<dbReference type="InterPro" id="IPR045864">
    <property type="entry name" value="aa-tRNA-synth_II/BPL/LPL"/>
</dbReference>
<dbReference type="InterPro" id="IPR004529">
    <property type="entry name" value="Phe-tRNA-synth_IIc_asu"/>
</dbReference>
<dbReference type="InterPro" id="IPR004188">
    <property type="entry name" value="Phe-tRNA_ligase_II_N"/>
</dbReference>
<dbReference type="InterPro" id="IPR022911">
    <property type="entry name" value="Phe_tRNA_ligase_alpha1_bac"/>
</dbReference>
<dbReference type="InterPro" id="IPR002319">
    <property type="entry name" value="Phenylalanyl-tRNA_Synthase"/>
</dbReference>
<dbReference type="InterPro" id="IPR010978">
    <property type="entry name" value="tRNA-bd_arm"/>
</dbReference>
<dbReference type="NCBIfam" id="TIGR00468">
    <property type="entry name" value="pheS"/>
    <property type="match status" value="1"/>
</dbReference>
<dbReference type="PANTHER" id="PTHR11538:SF41">
    <property type="entry name" value="PHENYLALANINE--TRNA LIGASE, MITOCHONDRIAL"/>
    <property type="match status" value="1"/>
</dbReference>
<dbReference type="PANTHER" id="PTHR11538">
    <property type="entry name" value="PHENYLALANYL-TRNA SYNTHETASE"/>
    <property type="match status" value="1"/>
</dbReference>
<dbReference type="Pfam" id="PF02912">
    <property type="entry name" value="Phe_tRNA-synt_N"/>
    <property type="match status" value="1"/>
</dbReference>
<dbReference type="Pfam" id="PF01409">
    <property type="entry name" value="tRNA-synt_2d"/>
    <property type="match status" value="1"/>
</dbReference>
<dbReference type="SUPFAM" id="SSF55681">
    <property type="entry name" value="Class II aaRS and biotin synthetases"/>
    <property type="match status" value="1"/>
</dbReference>
<dbReference type="SUPFAM" id="SSF46589">
    <property type="entry name" value="tRNA-binding arm"/>
    <property type="match status" value="1"/>
</dbReference>
<dbReference type="PROSITE" id="PS50862">
    <property type="entry name" value="AA_TRNA_LIGASE_II"/>
    <property type="match status" value="1"/>
</dbReference>
<comment type="catalytic activity">
    <reaction evidence="1">
        <text>tRNA(Phe) + L-phenylalanine + ATP = L-phenylalanyl-tRNA(Phe) + AMP + diphosphate + H(+)</text>
        <dbReference type="Rhea" id="RHEA:19413"/>
        <dbReference type="Rhea" id="RHEA-COMP:9668"/>
        <dbReference type="Rhea" id="RHEA-COMP:9699"/>
        <dbReference type="ChEBI" id="CHEBI:15378"/>
        <dbReference type="ChEBI" id="CHEBI:30616"/>
        <dbReference type="ChEBI" id="CHEBI:33019"/>
        <dbReference type="ChEBI" id="CHEBI:58095"/>
        <dbReference type="ChEBI" id="CHEBI:78442"/>
        <dbReference type="ChEBI" id="CHEBI:78531"/>
        <dbReference type="ChEBI" id="CHEBI:456215"/>
        <dbReference type="EC" id="6.1.1.20"/>
    </reaction>
</comment>
<comment type="cofactor">
    <cofactor evidence="1">
        <name>Mg(2+)</name>
        <dbReference type="ChEBI" id="CHEBI:18420"/>
    </cofactor>
    <text evidence="1">Binds 2 magnesium ions per tetramer.</text>
</comment>
<comment type="subunit">
    <text evidence="1">Tetramer of two alpha and two beta subunits.</text>
</comment>
<comment type="subcellular location">
    <subcellularLocation>
        <location evidence="1">Cytoplasm</location>
    </subcellularLocation>
</comment>
<comment type="similarity">
    <text evidence="1">Belongs to the class-II aminoacyl-tRNA synthetase family. Phe-tRNA synthetase alpha subunit type 1 subfamily.</text>
</comment>
<reference key="1">
    <citation type="submission" date="2007-06" db="EMBL/GenBank/DDBJ databases">
        <title>Complete sequence of Sinorhizobium medicae WSM419 chromosome.</title>
        <authorList>
            <consortium name="US DOE Joint Genome Institute"/>
            <person name="Copeland A."/>
            <person name="Lucas S."/>
            <person name="Lapidus A."/>
            <person name="Barry K."/>
            <person name="Glavina del Rio T."/>
            <person name="Dalin E."/>
            <person name="Tice H."/>
            <person name="Pitluck S."/>
            <person name="Chain P."/>
            <person name="Malfatti S."/>
            <person name="Shin M."/>
            <person name="Vergez L."/>
            <person name="Schmutz J."/>
            <person name="Larimer F."/>
            <person name="Land M."/>
            <person name="Hauser L."/>
            <person name="Kyrpides N."/>
            <person name="Mikhailova N."/>
            <person name="Reeve W.G."/>
            <person name="Richardson P."/>
        </authorList>
    </citation>
    <scope>NUCLEOTIDE SEQUENCE [LARGE SCALE GENOMIC DNA]</scope>
    <source>
        <strain>WSM419</strain>
    </source>
</reference>
<evidence type="ECO:0000255" key="1">
    <source>
        <dbReference type="HAMAP-Rule" id="MF_00281"/>
    </source>
</evidence>
<feature type="chain" id="PRO_1000006902" description="Phenylalanine--tRNA ligase alpha subunit">
    <location>
        <begin position="1"/>
        <end position="360"/>
    </location>
</feature>
<feature type="binding site" evidence="1">
    <location>
        <position position="260"/>
    </location>
    <ligand>
        <name>Mg(2+)</name>
        <dbReference type="ChEBI" id="CHEBI:18420"/>
        <note>shared with beta subunit</note>
    </ligand>
</feature>
<organism>
    <name type="scientific">Sinorhizobium medicae (strain WSM419)</name>
    <name type="common">Ensifer medicae</name>
    <dbReference type="NCBI Taxonomy" id="366394"/>
    <lineage>
        <taxon>Bacteria</taxon>
        <taxon>Pseudomonadati</taxon>
        <taxon>Pseudomonadota</taxon>
        <taxon>Alphaproteobacteria</taxon>
        <taxon>Hyphomicrobiales</taxon>
        <taxon>Rhizobiaceae</taxon>
        <taxon>Sinorhizobium/Ensifer group</taxon>
        <taxon>Sinorhizobium</taxon>
    </lineage>
</organism>
<name>SYFA_SINMW</name>
<protein>
    <recommendedName>
        <fullName evidence="1">Phenylalanine--tRNA ligase alpha subunit</fullName>
        <ecNumber evidence="1">6.1.1.20</ecNumber>
    </recommendedName>
    <alternativeName>
        <fullName evidence="1">Phenylalanyl-tRNA synthetase alpha subunit</fullName>
        <shortName evidence="1">PheRS</shortName>
    </alternativeName>
</protein>